<organism>
    <name type="scientific">Salmonella paratyphi C (strain RKS4594)</name>
    <dbReference type="NCBI Taxonomy" id="476213"/>
    <lineage>
        <taxon>Bacteria</taxon>
        <taxon>Pseudomonadati</taxon>
        <taxon>Pseudomonadota</taxon>
        <taxon>Gammaproteobacteria</taxon>
        <taxon>Enterobacterales</taxon>
        <taxon>Enterobacteriaceae</taxon>
        <taxon>Salmonella</taxon>
    </lineage>
</organism>
<gene>
    <name evidence="1" type="primary">rplP</name>
    <name type="ordered locus">SPC_3502</name>
</gene>
<accession>C0Q0A9</accession>
<feature type="chain" id="PRO_1000166376" description="Large ribosomal subunit protein uL16">
    <location>
        <begin position="1"/>
        <end position="136"/>
    </location>
</feature>
<dbReference type="EMBL" id="CP000857">
    <property type="protein sequence ID" value="ACN47586.1"/>
    <property type="molecule type" value="Genomic_DNA"/>
</dbReference>
<dbReference type="RefSeq" id="WP_000941208.1">
    <property type="nucleotide sequence ID" value="NC_012125.1"/>
</dbReference>
<dbReference type="SMR" id="C0Q0A9"/>
<dbReference type="GeneID" id="93035738"/>
<dbReference type="KEGG" id="sei:SPC_3502"/>
<dbReference type="HOGENOM" id="CLU_078858_2_1_6"/>
<dbReference type="Proteomes" id="UP000001599">
    <property type="component" value="Chromosome"/>
</dbReference>
<dbReference type="GO" id="GO:0022625">
    <property type="term" value="C:cytosolic large ribosomal subunit"/>
    <property type="evidence" value="ECO:0007669"/>
    <property type="project" value="TreeGrafter"/>
</dbReference>
<dbReference type="GO" id="GO:0019843">
    <property type="term" value="F:rRNA binding"/>
    <property type="evidence" value="ECO:0007669"/>
    <property type="project" value="UniProtKB-UniRule"/>
</dbReference>
<dbReference type="GO" id="GO:0003735">
    <property type="term" value="F:structural constituent of ribosome"/>
    <property type="evidence" value="ECO:0007669"/>
    <property type="project" value="InterPro"/>
</dbReference>
<dbReference type="GO" id="GO:0000049">
    <property type="term" value="F:tRNA binding"/>
    <property type="evidence" value="ECO:0007669"/>
    <property type="project" value="UniProtKB-KW"/>
</dbReference>
<dbReference type="GO" id="GO:0006412">
    <property type="term" value="P:translation"/>
    <property type="evidence" value="ECO:0007669"/>
    <property type="project" value="UniProtKB-UniRule"/>
</dbReference>
<dbReference type="CDD" id="cd01433">
    <property type="entry name" value="Ribosomal_L16_L10e"/>
    <property type="match status" value="1"/>
</dbReference>
<dbReference type="FunFam" id="3.90.1170.10:FF:000001">
    <property type="entry name" value="50S ribosomal protein L16"/>
    <property type="match status" value="1"/>
</dbReference>
<dbReference type="Gene3D" id="3.90.1170.10">
    <property type="entry name" value="Ribosomal protein L10e/L16"/>
    <property type="match status" value="1"/>
</dbReference>
<dbReference type="HAMAP" id="MF_01342">
    <property type="entry name" value="Ribosomal_uL16"/>
    <property type="match status" value="1"/>
</dbReference>
<dbReference type="InterPro" id="IPR047873">
    <property type="entry name" value="Ribosomal_uL16"/>
</dbReference>
<dbReference type="InterPro" id="IPR000114">
    <property type="entry name" value="Ribosomal_uL16_bact-type"/>
</dbReference>
<dbReference type="InterPro" id="IPR020798">
    <property type="entry name" value="Ribosomal_uL16_CS"/>
</dbReference>
<dbReference type="InterPro" id="IPR016180">
    <property type="entry name" value="Ribosomal_uL16_dom"/>
</dbReference>
<dbReference type="InterPro" id="IPR036920">
    <property type="entry name" value="Ribosomal_uL16_sf"/>
</dbReference>
<dbReference type="NCBIfam" id="TIGR01164">
    <property type="entry name" value="rplP_bact"/>
    <property type="match status" value="1"/>
</dbReference>
<dbReference type="PANTHER" id="PTHR12220">
    <property type="entry name" value="50S/60S RIBOSOMAL PROTEIN L16"/>
    <property type="match status" value="1"/>
</dbReference>
<dbReference type="PANTHER" id="PTHR12220:SF13">
    <property type="entry name" value="LARGE RIBOSOMAL SUBUNIT PROTEIN UL16M"/>
    <property type="match status" value="1"/>
</dbReference>
<dbReference type="Pfam" id="PF00252">
    <property type="entry name" value="Ribosomal_L16"/>
    <property type="match status" value="1"/>
</dbReference>
<dbReference type="PRINTS" id="PR00060">
    <property type="entry name" value="RIBOSOMALL16"/>
</dbReference>
<dbReference type="SUPFAM" id="SSF54686">
    <property type="entry name" value="Ribosomal protein L16p/L10e"/>
    <property type="match status" value="1"/>
</dbReference>
<dbReference type="PROSITE" id="PS00586">
    <property type="entry name" value="RIBOSOMAL_L16_1"/>
    <property type="match status" value="1"/>
</dbReference>
<dbReference type="PROSITE" id="PS00701">
    <property type="entry name" value="RIBOSOMAL_L16_2"/>
    <property type="match status" value="1"/>
</dbReference>
<reference key="1">
    <citation type="journal article" date="2009" name="PLoS ONE">
        <title>Salmonella paratyphi C: genetic divergence from Salmonella choleraesuis and pathogenic convergence with Salmonella typhi.</title>
        <authorList>
            <person name="Liu W.-Q."/>
            <person name="Feng Y."/>
            <person name="Wang Y."/>
            <person name="Zou Q.-H."/>
            <person name="Chen F."/>
            <person name="Guo J.-T."/>
            <person name="Peng Y.-H."/>
            <person name="Jin Y."/>
            <person name="Li Y.-G."/>
            <person name="Hu S.-N."/>
            <person name="Johnston R.N."/>
            <person name="Liu G.-R."/>
            <person name="Liu S.-L."/>
        </authorList>
    </citation>
    <scope>NUCLEOTIDE SEQUENCE [LARGE SCALE GENOMIC DNA]</scope>
    <source>
        <strain>RKS4594</strain>
    </source>
</reference>
<proteinExistence type="inferred from homology"/>
<keyword id="KW-0687">Ribonucleoprotein</keyword>
<keyword id="KW-0689">Ribosomal protein</keyword>
<keyword id="KW-0694">RNA-binding</keyword>
<keyword id="KW-0699">rRNA-binding</keyword>
<keyword id="KW-0820">tRNA-binding</keyword>
<name>RL16_SALPC</name>
<evidence type="ECO:0000255" key="1">
    <source>
        <dbReference type="HAMAP-Rule" id="MF_01342"/>
    </source>
</evidence>
<evidence type="ECO:0000305" key="2"/>
<sequence length="136" mass="15194">MLQPKRTKFRKMHKGRNRGLAAGADVSFGSFGLKAVGRGRLTARQIEAARRAMTRAVKRQGKIWIRVFPDKPITEKPLAVRMGKGKGNVEYWVALIQPGKVLYEMDGVPEELAREAFKLAAAKLPIKTTFVTKTVM</sequence>
<protein>
    <recommendedName>
        <fullName evidence="1">Large ribosomal subunit protein uL16</fullName>
    </recommendedName>
    <alternativeName>
        <fullName evidence="2">50S ribosomal protein L16</fullName>
    </alternativeName>
</protein>
<comment type="function">
    <text evidence="1">Binds 23S rRNA and is also seen to make contacts with the A and possibly P site tRNAs.</text>
</comment>
<comment type="subunit">
    <text evidence="1">Part of the 50S ribosomal subunit.</text>
</comment>
<comment type="similarity">
    <text evidence="1">Belongs to the universal ribosomal protein uL16 family.</text>
</comment>